<reference key="1">
    <citation type="journal article" date="2004" name="Nat. Genet.">
        <title>Complete sequencing and characterization of 21,243 full-length human cDNAs.</title>
        <authorList>
            <person name="Ota T."/>
            <person name="Suzuki Y."/>
            <person name="Nishikawa T."/>
            <person name="Otsuki T."/>
            <person name="Sugiyama T."/>
            <person name="Irie R."/>
            <person name="Wakamatsu A."/>
            <person name="Hayashi K."/>
            <person name="Sato H."/>
            <person name="Nagai K."/>
            <person name="Kimura K."/>
            <person name="Makita H."/>
            <person name="Sekine M."/>
            <person name="Obayashi M."/>
            <person name="Nishi T."/>
            <person name="Shibahara T."/>
            <person name="Tanaka T."/>
            <person name="Ishii S."/>
            <person name="Yamamoto J."/>
            <person name="Saito K."/>
            <person name="Kawai Y."/>
            <person name="Isono Y."/>
            <person name="Nakamura Y."/>
            <person name="Nagahari K."/>
            <person name="Murakami K."/>
            <person name="Yasuda T."/>
            <person name="Iwayanagi T."/>
            <person name="Wagatsuma M."/>
            <person name="Shiratori A."/>
            <person name="Sudo H."/>
            <person name="Hosoiri T."/>
            <person name="Kaku Y."/>
            <person name="Kodaira H."/>
            <person name="Kondo H."/>
            <person name="Sugawara M."/>
            <person name="Takahashi M."/>
            <person name="Kanda K."/>
            <person name="Yokoi T."/>
            <person name="Furuya T."/>
            <person name="Kikkawa E."/>
            <person name="Omura Y."/>
            <person name="Abe K."/>
            <person name="Kamihara K."/>
            <person name="Katsuta N."/>
            <person name="Sato K."/>
            <person name="Tanikawa M."/>
            <person name="Yamazaki M."/>
            <person name="Ninomiya K."/>
            <person name="Ishibashi T."/>
            <person name="Yamashita H."/>
            <person name="Murakawa K."/>
            <person name="Fujimori K."/>
            <person name="Tanai H."/>
            <person name="Kimata M."/>
            <person name="Watanabe M."/>
            <person name="Hiraoka S."/>
            <person name="Chiba Y."/>
            <person name="Ishida S."/>
            <person name="Ono Y."/>
            <person name="Takiguchi S."/>
            <person name="Watanabe S."/>
            <person name="Yosida M."/>
            <person name="Hotuta T."/>
            <person name="Kusano J."/>
            <person name="Kanehori K."/>
            <person name="Takahashi-Fujii A."/>
            <person name="Hara H."/>
            <person name="Tanase T.-O."/>
            <person name="Nomura Y."/>
            <person name="Togiya S."/>
            <person name="Komai F."/>
            <person name="Hara R."/>
            <person name="Takeuchi K."/>
            <person name="Arita M."/>
            <person name="Imose N."/>
            <person name="Musashino K."/>
            <person name="Yuuki H."/>
            <person name="Oshima A."/>
            <person name="Sasaki N."/>
            <person name="Aotsuka S."/>
            <person name="Yoshikawa Y."/>
            <person name="Matsunawa H."/>
            <person name="Ichihara T."/>
            <person name="Shiohata N."/>
            <person name="Sano S."/>
            <person name="Moriya S."/>
            <person name="Momiyama H."/>
            <person name="Satoh N."/>
            <person name="Takami S."/>
            <person name="Terashima Y."/>
            <person name="Suzuki O."/>
            <person name="Nakagawa S."/>
            <person name="Senoh A."/>
            <person name="Mizoguchi H."/>
            <person name="Goto Y."/>
            <person name="Shimizu F."/>
            <person name="Wakebe H."/>
            <person name="Hishigaki H."/>
            <person name="Watanabe T."/>
            <person name="Sugiyama A."/>
            <person name="Takemoto M."/>
            <person name="Kawakami B."/>
            <person name="Yamazaki M."/>
            <person name="Watanabe K."/>
            <person name="Kumagai A."/>
            <person name="Itakura S."/>
            <person name="Fukuzumi Y."/>
            <person name="Fujimori Y."/>
            <person name="Komiyama M."/>
            <person name="Tashiro H."/>
            <person name="Tanigami A."/>
            <person name="Fujiwara T."/>
            <person name="Ono T."/>
            <person name="Yamada K."/>
            <person name="Fujii Y."/>
            <person name="Ozaki K."/>
            <person name="Hirao M."/>
            <person name="Ohmori Y."/>
            <person name="Kawabata A."/>
            <person name="Hikiji T."/>
            <person name="Kobatake N."/>
            <person name="Inagaki H."/>
            <person name="Ikema Y."/>
            <person name="Okamoto S."/>
            <person name="Okitani R."/>
            <person name="Kawakami T."/>
            <person name="Noguchi S."/>
            <person name="Itoh T."/>
            <person name="Shigeta K."/>
            <person name="Senba T."/>
            <person name="Matsumura K."/>
            <person name="Nakajima Y."/>
            <person name="Mizuno T."/>
            <person name="Morinaga M."/>
            <person name="Sasaki M."/>
            <person name="Togashi T."/>
            <person name="Oyama M."/>
            <person name="Hata H."/>
            <person name="Watanabe M."/>
            <person name="Komatsu T."/>
            <person name="Mizushima-Sugano J."/>
            <person name="Satoh T."/>
            <person name="Shirai Y."/>
            <person name="Takahashi Y."/>
            <person name="Nakagawa K."/>
            <person name="Okumura K."/>
            <person name="Nagase T."/>
            <person name="Nomura N."/>
            <person name="Kikuchi H."/>
            <person name="Masuho Y."/>
            <person name="Yamashita R."/>
            <person name="Nakai K."/>
            <person name="Yada T."/>
            <person name="Nakamura Y."/>
            <person name="Ohara O."/>
            <person name="Isogai T."/>
            <person name="Sugano S."/>
        </authorList>
    </citation>
    <scope>NUCLEOTIDE SEQUENCE [LARGE SCALE MRNA] (ISOFORM 4)</scope>
    <source>
        <tissue>Cerebellum</tissue>
    </source>
</reference>
<reference key="2">
    <citation type="journal article" date="2006" name="Nature">
        <title>The DNA sequence and biological annotation of human chromosome 1.</title>
        <authorList>
            <person name="Gregory S.G."/>
            <person name="Barlow K.F."/>
            <person name="McLay K.E."/>
            <person name="Kaul R."/>
            <person name="Swarbreck D."/>
            <person name="Dunham A."/>
            <person name="Scott C.E."/>
            <person name="Howe K.L."/>
            <person name="Woodfine K."/>
            <person name="Spencer C.C.A."/>
            <person name="Jones M.C."/>
            <person name="Gillson C."/>
            <person name="Searle S."/>
            <person name="Zhou Y."/>
            <person name="Kokocinski F."/>
            <person name="McDonald L."/>
            <person name="Evans R."/>
            <person name="Phillips K."/>
            <person name="Atkinson A."/>
            <person name="Cooper R."/>
            <person name="Jones C."/>
            <person name="Hall R.E."/>
            <person name="Andrews T.D."/>
            <person name="Lloyd C."/>
            <person name="Ainscough R."/>
            <person name="Almeida J.P."/>
            <person name="Ambrose K.D."/>
            <person name="Anderson F."/>
            <person name="Andrew R.W."/>
            <person name="Ashwell R.I.S."/>
            <person name="Aubin K."/>
            <person name="Babbage A.K."/>
            <person name="Bagguley C.L."/>
            <person name="Bailey J."/>
            <person name="Beasley H."/>
            <person name="Bethel G."/>
            <person name="Bird C.P."/>
            <person name="Bray-Allen S."/>
            <person name="Brown J.Y."/>
            <person name="Brown A.J."/>
            <person name="Buckley D."/>
            <person name="Burton J."/>
            <person name="Bye J."/>
            <person name="Carder C."/>
            <person name="Chapman J.C."/>
            <person name="Clark S.Y."/>
            <person name="Clarke G."/>
            <person name="Clee C."/>
            <person name="Cobley V."/>
            <person name="Collier R.E."/>
            <person name="Corby N."/>
            <person name="Coville G.J."/>
            <person name="Davies J."/>
            <person name="Deadman R."/>
            <person name="Dunn M."/>
            <person name="Earthrowl M."/>
            <person name="Ellington A.G."/>
            <person name="Errington H."/>
            <person name="Frankish A."/>
            <person name="Frankland J."/>
            <person name="French L."/>
            <person name="Garner P."/>
            <person name="Garnett J."/>
            <person name="Gay L."/>
            <person name="Ghori M.R.J."/>
            <person name="Gibson R."/>
            <person name="Gilby L.M."/>
            <person name="Gillett W."/>
            <person name="Glithero R.J."/>
            <person name="Grafham D.V."/>
            <person name="Griffiths C."/>
            <person name="Griffiths-Jones S."/>
            <person name="Grocock R."/>
            <person name="Hammond S."/>
            <person name="Harrison E.S.I."/>
            <person name="Hart E."/>
            <person name="Haugen E."/>
            <person name="Heath P.D."/>
            <person name="Holmes S."/>
            <person name="Holt K."/>
            <person name="Howden P.J."/>
            <person name="Hunt A.R."/>
            <person name="Hunt S.E."/>
            <person name="Hunter G."/>
            <person name="Isherwood J."/>
            <person name="James R."/>
            <person name="Johnson C."/>
            <person name="Johnson D."/>
            <person name="Joy A."/>
            <person name="Kay M."/>
            <person name="Kershaw J.K."/>
            <person name="Kibukawa M."/>
            <person name="Kimberley A.M."/>
            <person name="King A."/>
            <person name="Knights A.J."/>
            <person name="Lad H."/>
            <person name="Laird G."/>
            <person name="Lawlor S."/>
            <person name="Leongamornlert D.A."/>
            <person name="Lloyd D.M."/>
            <person name="Loveland J."/>
            <person name="Lovell J."/>
            <person name="Lush M.J."/>
            <person name="Lyne R."/>
            <person name="Martin S."/>
            <person name="Mashreghi-Mohammadi M."/>
            <person name="Matthews L."/>
            <person name="Matthews N.S.W."/>
            <person name="McLaren S."/>
            <person name="Milne S."/>
            <person name="Mistry S."/>
            <person name="Moore M.J.F."/>
            <person name="Nickerson T."/>
            <person name="O'Dell C.N."/>
            <person name="Oliver K."/>
            <person name="Palmeiri A."/>
            <person name="Palmer S.A."/>
            <person name="Parker A."/>
            <person name="Patel D."/>
            <person name="Pearce A.V."/>
            <person name="Peck A.I."/>
            <person name="Pelan S."/>
            <person name="Phelps K."/>
            <person name="Phillimore B.J."/>
            <person name="Plumb R."/>
            <person name="Rajan J."/>
            <person name="Raymond C."/>
            <person name="Rouse G."/>
            <person name="Saenphimmachak C."/>
            <person name="Sehra H.K."/>
            <person name="Sheridan E."/>
            <person name="Shownkeen R."/>
            <person name="Sims S."/>
            <person name="Skuce C.D."/>
            <person name="Smith M."/>
            <person name="Steward C."/>
            <person name="Subramanian S."/>
            <person name="Sycamore N."/>
            <person name="Tracey A."/>
            <person name="Tromans A."/>
            <person name="Van Helmond Z."/>
            <person name="Wall M."/>
            <person name="Wallis J.M."/>
            <person name="White S."/>
            <person name="Whitehead S.L."/>
            <person name="Wilkinson J.E."/>
            <person name="Willey D.L."/>
            <person name="Williams H."/>
            <person name="Wilming L."/>
            <person name="Wray P.W."/>
            <person name="Wu Z."/>
            <person name="Coulson A."/>
            <person name="Vaudin M."/>
            <person name="Sulston J.E."/>
            <person name="Durbin R.M."/>
            <person name="Hubbard T."/>
            <person name="Wooster R."/>
            <person name="Dunham I."/>
            <person name="Carter N.P."/>
            <person name="McVean G."/>
            <person name="Ross M.T."/>
            <person name="Harrow J."/>
            <person name="Olson M.V."/>
            <person name="Beck S."/>
            <person name="Rogers J."/>
            <person name="Bentley D.R."/>
        </authorList>
    </citation>
    <scope>NUCLEOTIDE SEQUENCE [LARGE SCALE GENOMIC DNA]</scope>
</reference>
<reference key="3">
    <citation type="journal article" date="2004" name="Genome Res.">
        <title>The status, quality, and expansion of the NIH full-length cDNA project: the Mammalian Gene Collection (MGC).</title>
        <authorList>
            <consortium name="The MGC Project Team"/>
        </authorList>
    </citation>
    <scope>NUCLEOTIDE SEQUENCE [LARGE SCALE MRNA] (ISOFORMS 2 AND 3)</scope>
</reference>
<reference key="4">
    <citation type="journal article" date="2024" name="Am. J. Hum. Genet.">
        <title>CIROZ is dispensable in ancestral vertebrates but essential for left-right patterning in humans.</title>
        <authorList>
            <person name="Szenker-Ravi E."/>
            <person name="Ott T."/>
            <person name="Yusof A."/>
            <person name="Chopra M."/>
            <person name="Khatoo M."/>
            <person name="Pak B."/>
            <person name="Xuan Goh W."/>
            <person name="Beckers A."/>
            <person name="Brady A.F."/>
            <person name="Ewans L.J."/>
            <person name="Djaziri N."/>
            <person name="Almontashiri N.A.M."/>
            <person name="Alghamdi M.A."/>
            <person name="Alharby E."/>
            <person name="Dasouki M."/>
            <person name="Romo L."/>
            <person name="Tan W.H."/>
            <person name="Maddirevula S."/>
            <person name="Alkuraya F.S."/>
            <person name="Giordano J.L."/>
            <person name="Alkelai A."/>
            <person name="Wapner R.J."/>
            <person name="Stals K."/>
            <person name="Alfadhel M."/>
            <person name="Alswaid A.F."/>
            <person name="Bogusch S."/>
            <person name="Schafer-Kosulya A."/>
            <person name="Vogel S."/>
            <person name="Vick P."/>
            <person name="Schweickert A."/>
            <person name="Wakeling M."/>
            <person name="Moreau de Bellaing A."/>
            <person name="Alshamsi A.M."/>
            <person name="Sanlaville D."/>
            <person name="Mbarek H."/>
            <person name="Saad C."/>
            <person name="Ellard S."/>
            <person name="Eisenhaber F."/>
            <person name="Tripolszki K."/>
            <person name="Beetz C."/>
            <person name="Bauer P."/>
            <person name="Gossler A."/>
            <person name="Eisenhaber B."/>
            <person name="Blum M."/>
            <person name="Bouvagnet P."/>
            <person name="Bertoli-Avella A."/>
            <person name="Amiel J."/>
            <person name="Gordon C.T."/>
            <person name="Reversade B."/>
        </authorList>
    </citation>
    <scope>FUNCTION</scope>
    <scope>SUBCELLULAR LOCATION</scope>
    <scope>CAUTION</scope>
    <scope>VARIANTS HTX14 MET-19; 113-ARG--ARG-823 DEL AND 193-ARG--ARG-823 DEL</scope>
    <scope>INVOLVEMENT IN HTX14</scope>
</reference>
<feature type="signal peptide" evidence="1">
    <location>
        <begin position="1"/>
        <end position="22"/>
    </location>
</feature>
<feature type="chain" id="PRO_0000284492" description="Ciliated left-right organizer ZP-N domains-containing protein">
    <location>
        <begin position="23"/>
        <end position="823"/>
    </location>
</feature>
<feature type="region of interest" description="Disordered" evidence="2">
    <location>
        <begin position="206"/>
        <end position="242"/>
    </location>
</feature>
<feature type="region of interest" description="Disordered" evidence="2">
    <location>
        <begin position="269"/>
        <end position="422"/>
    </location>
</feature>
<feature type="region of interest" description="Disordered" evidence="2">
    <location>
        <begin position="434"/>
        <end position="520"/>
    </location>
</feature>
<feature type="region of interest" description="Disordered" evidence="2">
    <location>
        <begin position="632"/>
        <end position="656"/>
    </location>
</feature>
<feature type="compositionally biased region" description="Pro residues" evidence="2">
    <location>
        <begin position="216"/>
        <end position="230"/>
    </location>
</feature>
<feature type="compositionally biased region" description="Low complexity" evidence="2">
    <location>
        <begin position="389"/>
        <end position="402"/>
    </location>
</feature>
<feature type="splice variant" id="VSP_062558" description="In isoform 2, isoform 3 and isoform 4.">
    <location>
        <begin position="1"/>
        <end position="149"/>
    </location>
</feature>
<feature type="splice variant" id="VSP_062559" description="In isoform 2 and isoform 4." evidence="4">
    <original>LNTSAELLPLWLVSGHHAYSLEAACPP</original>
    <variation>SGGQQALPG</variation>
    <location>
        <begin position="233"/>
        <end position="259"/>
    </location>
</feature>
<feature type="splice variant" id="VSP_062560" description="In isoform 2." evidence="4">
    <location>
        <begin position="405"/>
        <end position="430"/>
    </location>
</feature>
<feature type="sequence variant" id="VAR_090380" description="In HTX14; uncertain significance." evidence="3">
    <original>T</original>
    <variation>M</variation>
    <location>
        <position position="19"/>
    </location>
</feature>
<feature type="sequence variant" id="VAR_090381" description="In HTX14; pathogenic." evidence="3">
    <location>
        <begin position="113"/>
        <end position="823"/>
    </location>
</feature>
<feature type="sequence variant" id="VAR_090382" description="In HTX14; pathogenic." evidence="3">
    <location>
        <begin position="193"/>
        <end position="823"/>
    </location>
</feature>
<feature type="sequence variant" id="VAR_056766" description="In dbSNP:rs1281012.">
    <original>R</original>
    <variation>Q</variation>
    <location>
        <position position="423"/>
    </location>
</feature>
<feature type="sequence variant" id="VAR_056767" description="In dbSNP:rs1281016.">
    <original>V</original>
    <variation>D</variation>
    <location>
        <position position="533"/>
    </location>
</feature>
<feature type="sequence variant" id="VAR_031750" description="In dbSNP:rs1281018.">
    <original>A</original>
    <variation>V</variation>
    <location>
        <position position="697"/>
    </location>
</feature>
<feature type="sequence conflict" description="In Ref. 1; BAC04355." evidence="5" ref="1">
    <original>F</original>
    <variation>L</variation>
    <location>
        <position position="294"/>
    </location>
</feature>
<feature type="sequence conflict" description="In Ref. 1; BAC04355." evidence="5" ref="1">
    <original>S</original>
    <variation>P</variation>
    <location>
        <position position="372"/>
    </location>
</feature>
<sequence length="823" mass="89019">MWGSPALAWAVWLACVQPTVFPWSLSFRSDTDKPSSAAEVLTEASSCWTDTVECFSDYMTLWIPRSHVEGLRRWLARTLHLPGTWRSPDHLDSSLAKCGYFLHLASDGDFLFRVQYSACFVQKEKANYRLEIRIFQKGVMGLERSDRYIMKCPMLRSRLGQESVHCGPMFIQVSRPLPLWRDNRQTPWLLSLRGELVASLEDASLMGLYVDMNATTVTVQSPRQGLLQRWEVLNTSAELLPLWLVSGHHAYSLEAACPPVSFQPESEVLVHIPKQRLGLVKRGSYIEETLSLRFLRVHQSNIFMVTENKDFVVVSIPAAGVLQVQRCQEVGGTPGTQAFYRVDLSLEFAEMAAPVLWTVESFFQCVGSGTESPASTAALRTTPSPPSPGPETPPAGVPPAASSQVWAAGPAAQEWLSRDLLHRPSDALAKKGLGPFLQTAKPARRGQTSASILPRVVQAQRGPQPPPGEAGIPGHPTPPATLPSEPVEGVQASPWRPRPVLPTHPALTLPVSSDASSPSPPAPRPERPESLLVSGPSVTLTEGLGTVRPEQDPAKSPGSPLLLRGLSSGDVAAPEPIMGEPGQASEEFQPLARPWRATLAAEELVSHRSPGEPQETCSGTEVERPRQTGPGLPREGARGHMDLSSSEPSQDIEGPGLSILPARDATFSTPSVRQPDPSAWLSSGPELTGMPRVRLAAPLAVLPMEPLPPEPVRPAALLTPEASSVGGPDQARYLESAPGWPVGQEEWGVAHTSSPPSTQTLSLWAPTGVLLPSLVELEYPFQAGRGASLQQELTEPTLALSAESHRPPELQDSVEGLSERPSR</sequence>
<protein>
    <recommendedName>
        <fullName>Ciliated left-right organizer ZP-N domains-containing protein</fullName>
    </recommendedName>
    <alternativeName>
        <fullName>Ciliated left-right organizer protein containing ZP-N domains</fullName>
    </alternativeName>
</protein>
<accession>Q8N9H9</accession>
<accession>A0AVG8</accession>
<accession>A6NKM7</accession>
<accession>B7ZLG7</accession>
<accession>G8JLG8</accession>
<accession>Q5VXJ2</accession>
<name>CIROZ_HUMAN</name>
<evidence type="ECO:0000255" key="1"/>
<evidence type="ECO:0000256" key="2">
    <source>
        <dbReference type="SAM" id="MobiDB-lite"/>
    </source>
</evidence>
<evidence type="ECO:0000269" key="3">
    <source>
    </source>
</evidence>
<evidence type="ECO:0000303" key="4">
    <source>
    </source>
</evidence>
<evidence type="ECO:0000305" key="5"/>
<evidence type="ECO:0000312" key="6">
    <source>
        <dbReference type="HGNC" id="HGNC:26730"/>
    </source>
</evidence>
<proteinExistence type="evidence at protein level"/>
<dbReference type="EMBL" id="AK094437">
    <property type="protein sequence ID" value="BAC04355.1"/>
    <property type="molecule type" value="mRNA"/>
</dbReference>
<dbReference type="EMBL" id="AL358492">
    <property type="status" value="NOT_ANNOTATED_CDS"/>
    <property type="molecule type" value="Genomic_DNA"/>
</dbReference>
<dbReference type="EMBL" id="BC126349">
    <property type="protein sequence ID" value="AAI26350.1"/>
    <property type="molecule type" value="mRNA"/>
</dbReference>
<dbReference type="EMBL" id="BC143794">
    <property type="protein sequence ID" value="AAI43795.1"/>
    <property type="molecule type" value="mRNA"/>
</dbReference>
<dbReference type="RefSeq" id="NP_001164225.1">
    <property type="nucleotide sequence ID" value="NM_001170754.1"/>
</dbReference>
<dbReference type="FunCoup" id="Q8N9H9">
    <property type="interactions" value="2"/>
</dbReference>
<dbReference type="IntAct" id="Q8N9H9">
    <property type="interactions" value="2"/>
</dbReference>
<dbReference type="STRING" id="9606.ENSP00000366203"/>
<dbReference type="GlyGen" id="Q8N9H9">
    <property type="glycosylation" value="2 sites"/>
</dbReference>
<dbReference type="iPTMnet" id="Q8N9H9"/>
<dbReference type="PhosphoSitePlus" id="Q8N9H9"/>
<dbReference type="BioMuta" id="C1orf127"/>
<dbReference type="DMDM" id="145558873"/>
<dbReference type="MassIVE" id="Q8N9H9"/>
<dbReference type="PaxDb" id="9606-ENSP00000366203"/>
<dbReference type="ProteomicsDB" id="34224"/>
<dbReference type="Antibodypedia" id="50924">
    <property type="antibodies" value="35 antibodies from 9 providers"/>
</dbReference>
<dbReference type="DNASU" id="148345"/>
<dbReference type="GeneID" id="148345"/>
<dbReference type="KEGG" id="hsa:148345"/>
<dbReference type="MANE-Select" id="ENST00000377004.9">
    <property type="protein sequence ID" value="ENSP00000366203.4"/>
    <property type="RefSeq nucleotide sequence ID" value="NM_001170754.2"/>
    <property type="RefSeq protein sequence ID" value="NP_001164225.1"/>
</dbReference>
<dbReference type="UCSC" id="uc010oao.2">
    <property type="organism name" value="human"/>
</dbReference>
<dbReference type="AGR" id="HGNC:26730"/>
<dbReference type="CTD" id="148345"/>
<dbReference type="DisGeNET" id="148345"/>
<dbReference type="GeneCards" id="C1orf127"/>
<dbReference type="HGNC" id="HGNC:26730">
    <property type="gene designation" value="CIROZ"/>
</dbReference>
<dbReference type="MIM" id="619700">
    <property type="type" value="gene"/>
</dbReference>
<dbReference type="MIM" id="621080">
    <property type="type" value="phenotype"/>
</dbReference>
<dbReference type="neXtProt" id="NX_Q8N9H9"/>
<dbReference type="VEuPathDB" id="HostDB:ENSG00000175262"/>
<dbReference type="eggNOG" id="ENOG502S0MU">
    <property type="taxonomic scope" value="Eukaryota"/>
</dbReference>
<dbReference type="GeneTree" id="ENSGT00390000003592"/>
<dbReference type="InParanoid" id="Q8N9H9"/>
<dbReference type="OMA" id="PWAPTGQ"/>
<dbReference type="OrthoDB" id="8946479at2759"/>
<dbReference type="PAN-GO" id="Q8N9H9">
    <property type="GO annotations" value="1 GO annotation based on evolutionary models"/>
</dbReference>
<dbReference type="PhylomeDB" id="Q8N9H9"/>
<dbReference type="TreeFam" id="TF338179"/>
<dbReference type="PathwayCommons" id="Q8N9H9"/>
<dbReference type="SignaLink" id="Q8N9H9"/>
<dbReference type="BioGRID-ORCS" id="148345">
    <property type="hits" value="9 hits in 1062 CRISPR screens"/>
</dbReference>
<dbReference type="Pharos" id="Q8N9H9">
    <property type="development level" value="Tdark"/>
</dbReference>
<dbReference type="PRO" id="PR:Q8N9H9"/>
<dbReference type="Proteomes" id="UP000005640">
    <property type="component" value="Chromosome 1"/>
</dbReference>
<dbReference type="RNAct" id="Q8N9H9">
    <property type="molecule type" value="protein"/>
</dbReference>
<dbReference type="Bgee" id="ENSG00000175262">
    <property type="expression patterns" value="Expressed in primordial germ cell in gonad and 109 other cell types or tissues"/>
</dbReference>
<dbReference type="ExpressionAtlas" id="G8JLG8">
    <property type="expression patterns" value="baseline and differential"/>
</dbReference>
<dbReference type="GO" id="GO:0005576">
    <property type="term" value="C:extracellular region"/>
    <property type="evidence" value="ECO:0000314"/>
    <property type="project" value="UniProtKB"/>
</dbReference>
<dbReference type="GO" id="GO:0061966">
    <property type="term" value="P:establishment of left/right asymmetry"/>
    <property type="evidence" value="ECO:0000315"/>
    <property type="project" value="UniProtKB"/>
</dbReference>
<dbReference type="InterPro" id="IPR027956">
    <property type="entry name" value="C1orf127-like"/>
</dbReference>
<dbReference type="InterPro" id="IPR049521">
    <property type="entry name" value="DUF4556"/>
</dbReference>
<dbReference type="PANTHER" id="PTHR38653">
    <property type="entry name" value="GENE 572-RELATED"/>
    <property type="match status" value="1"/>
</dbReference>
<dbReference type="PANTHER" id="PTHR38653:SF1">
    <property type="entry name" value="GENE 572-RELATED"/>
    <property type="match status" value="1"/>
</dbReference>
<dbReference type="Pfam" id="PF15094">
    <property type="entry name" value="DUF4556"/>
    <property type="match status" value="1"/>
</dbReference>
<organism>
    <name type="scientific">Homo sapiens</name>
    <name type="common">Human</name>
    <dbReference type="NCBI Taxonomy" id="9606"/>
    <lineage>
        <taxon>Eukaryota</taxon>
        <taxon>Metazoa</taxon>
        <taxon>Chordata</taxon>
        <taxon>Craniata</taxon>
        <taxon>Vertebrata</taxon>
        <taxon>Euteleostomi</taxon>
        <taxon>Mammalia</taxon>
        <taxon>Eutheria</taxon>
        <taxon>Euarchontoglires</taxon>
        <taxon>Primates</taxon>
        <taxon>Haplorrhini</taxon>
        <taxon>Catarrhini</taxon>
        <taxon>Hominidae</taxon>
        <taxon>Homo</taxon>
    </lineage>
</organism>
<keyword id="KW-0025">Alternative splicing</keyword>
<keyword id="KW-0225">Disease variant</keyword>
<keyword id="KW-1056">Heterotaxy</keyword>
<keyword id="KW-1185">Reference proteome</keyword>
<keyword id="KW-0964">Secreted</keyword>
<keyword id="KW-0732">Signal</keyword>
<comment type="function">
    <text evidence="3">Plays a role in left-right patterning process.</text>
</comment>
<comment type="subcellular location">
    <subcellularLocation>
        <location evidence="3">Secreted</location>
    </subcellularLocation>
</comment>
<comment type="alternative products">
    <event type="alternative splicing"/>
    <isoform>
        <id>Q8N9H9-1</id>
        <name>1</name>
        <sequence type="displayed"/>
    </isoform>
    <isoform>
        <id>Q8N9H9-2</id>
        <name>2</name>
        <sequence type="described" ref="VSP_062558 VSP_062559 VSP_062560"/>
    </isoform>
    <isoform>
        <id>Q8N9H9-3</id>
        <name>3</name>
        <sequence type="described" ref="VSP_062558"/>
    </isoform>
    <isoform>
        <id>Q8N9H9-4</id>
        <name>4</name>
        <sequence type="described" ref="VSP_062558 VSP_062559"/>
    </isoform>
</comment>
<comment type="disease" evidence="3">
    <disease id="DI-06992">
        <name>Heterotaxy, visceral, 14, autosomal</name>
        <acronym>HTX14</acronym>
        <description>A form of visceral heterotaxy, a complex disorder due to disruption of the normal left-right asymmetry of the thoracoabdominal organs. Visceral heterotaxy or situs ambiguus results in randomization of the placement of visceral organs, including the heart, lungs, liver, spleen, and stomach. The organs are oriented randomly with respect to the left-right axis and with respect to one another. It can be associated with a variety of congenital defects including cardiac malformations. HTX14 inheritance is autosomal recessive.</description>
        <dbReference type="MIM" id="621080"/>
    </disease>
    <text>The disease is caused by variants affecting the gene represented in this entry.</text>
</comment>
<comment type="caution">
    <text evidence="3">Undergoes pseudogenization. Present in fish, amphibians, and odd-toed mammals, including humans and rodents, but is absent or mutated in birds, reptiles, and cetartiodactyla.</text>
</comment>
<gene>
    <name evidence="6" type="primary">CIROZ</name>
    <name type="synonym">C1orf127</name>
</gene>